<accession>A3M0M0</accession>
<sequence length="157" mass="17267">MASKNSINKPKIKINAHSHAKTLGRKRAARARKNPSTKSSTSRYAEVSGTATKPSDSTAIALYTGEAPKPTGVVTNTTLSNKRAKKLARNQKYIDQRKNEGLGKEHEMDVEVETEEQRQSRLEQIKKALWSVVQNQSEGLYKVAVDAEGTTLGVQAF</sequence>
<reference key="1">
    <citation type="journal article" date="2007" name="Nat. Biotechnol.">
        <title>Genome sequence of the lignocellulose-bioconverting and xylose-fermenting yeast Pichia stipitis.</title>
        <authorList>
            <person name="Jeffries T.W."/>
            <person name="Grigoriev I.V."/>
            <person name="Grimwood J."/>
            <person name="Laplaza J.M."/>
            <person name="Aerts A."/>
            <person name="Salamov A."/>
            <person name="Schmutz J."/>
            <person name="Lindquist E."/>
            <person name="Dehal P."/>
            <person name="Shapiro H."/>
            <person name="Jin Y.-S."/>
            <person name="Passoth V."/>
            <person name="Richardson P.M."/>
        </authorList>
    </citation>
    <scope>NUCLEOTIDE SEQUENCE [LARGE SCALE GENOMIC DNA]</scope>
    <source>
        <strain>ATCC 58785 / CBS 6054 / NBRC 10063 / NRRL Y-11545</strain>
    </source>
</reference>
<keyword id="KW-0963">Cytoplasm</keyword>
<keyword id="KW-0539">Nucleus</keyword>
<keyword id="KW-1185">Reference proteome</keyword>
<keyword id="KW-0690">Ribosome biogenesis</keyword>
<keyword id="KW-0813">Transport</keyword>
<gene>
    <name type="primary">ALB1</name>
    <name type="ORF">PICST_66212</name>
</gene>
<dbReference type="EMBL" id="CP000502">
    <property type="protein sequence ID" value="ABN68729.1"/>
    <property type="molecule type" value="Genomic_DNA"/>
</dbReference>
<dbReference type="RefSeq" id="XP_001386758.1">
    <property type="nucleotide sequence ID" value="XM_001386721.1"/>
</dbReference>
<dbReference type="SMR" id="A3M0M0"/>
<dbReference type="FunCoup" id="A3M0M0">
    <property type="interactions" value="258"/>
</dbReference>
<dbReference type="STRING" id="322104.A3M0M0"/>
<dbReference type="GeneID" id="4841128"/>
<dbReference type="KEGG" id="pic:PICST_66212"/>
<dbReference type="eggNOG" id="ENOG502S14D">
    <property type="taxonomic scope" value="Eukaryota"/>
</dbReference>
<dbReference type="HOGENOM" id="CLU_103824_0_0_1"/>
<dbReference type="InParanoid" id="A3M0M0"/>
<dbReference type="OMA" id="HHKVHSL"/>
<dbReference type="OrthoDB" id="4086742at2759"/>
<dbReference type="Proteomes" id="UP000002258">
    <property type="component" value="Chromosome 8"/>
</dbReference>
<dbReference type="GO" id="GO:0005737">
    <property type="term" value="C:cytoplasm"/>
    <property type="evidence" value="ECO:0007669"/>
    <property type="project" value="UniProtKB-SubCell"/>
</dbReference>
<dbReference type="GO" id="GO:0005634">
    <property type="term" value="C:nucleus"/>
    <property type="evidence" value="ECO:0007669"/>
    <property type="project" value="UniProtKB-SubCell"/>
</dbReference>
<dbReference type="GO" id="GO:0042254">
    <property type="term" value="P:ribosome biogenesis"/>
    <property type="evidence" value="ECO:0007669"/>
    <property type="project" value="UniProtKB-KW"/>
</dbReference>
<dbReference type="InterPro" id="IPR022784">
    <property type="entry name" value="Ribosome_bgen_Alb1"/>
</dbReference>
<dbReference type="Pfam" id="PF09135">
    <property type="entry name" value="Alb1"/>
    <property type="match status" value="1"/>
</dbReference>
<protein>
    <recommendedName>
        <fullName>Ribosome biogenesis protein ALB1</fullName>
    </recommendedName>
</protein>
<name>ALB1_PICST</name>
<evidence type="ECO:0000250" key="1"/>
<evidence type="ECO:0000256" key="2">
    <source>
        <dbReference type="SAM" id="MobiDB-lite"/>
    </source>
</evidence>
<evidence type="ECO:0000305" key="3"/>
<proteinExistence type="inferred from homology"/>
<comment type="function">
    <text evidence="1">Involved in proper assembly of pre-ribosomal particles during the biogenesis of the 60S ribosomal subunit. Accompanies the pre-60S particles to the cytoplasm (By similarity).</text>
</comment>
<comment type="subunit">
    <text evidence="1">Component of the nucleoplasmic and cytoplasmic pre-60S ribosomal particles.</text>
</comment>
<comment type="subcellular location">
    <subcellularLocation>
        <location evidence="1">Cytoplasm</location>
    </subcellularLocation>
    <subcellularLocation>
        <location evidence="1">Nucleus</location>
    </subcellularLocation>
</comment>
<comment type="similarity">
    <text evidence="3">Belongs to the ALB1 family.</text>
</comment>
<organism>
    <name type="scientific">Scheffersomyces stipitis (strain ATCC 58785 / CBS 6054 / NBRC 10063 / NRRL Y-11545)</name>
    <name type="common">Yeast</name>
    <name type="synonym">Pichia stipitis</name>
    <dbReference type="NCBI Taxonomy" id="322104"/>
    <lineage>
        <taxon>Eukaryota</taxon>
        <taxon>Fungi</taxon>
        <taxon>Dikarya</taxon>
        <taxon>Ascomycota</taxon>
        <taxon>Saccharomycotina</taxon>
        <taxon>Pichiomycetes</taxon>
        <taxon>Debaryomycetaceae</taxon>
        <taxon>Scheffersomyces</taxon>
    </lineage>
</organism>
<feature type="chain" id="PRO_0000333331" description="Ribosome biogenesis protein ALB1">
    <location>
        <begin position="1"/>
        <end position="157"/>
    </location>
</feature>
<feature type="region of interest" description="Disordered" evidence="2">
    <location>
        <begin position="1"/>
        <end position="55"/>
    </location>
</feature>
<feature type="compositionally biased region" description="Basic residues" evidence="2">
    <location>
        <begin position="10"/>
        <end position="35"/>
    </location>
</feature>
<feature type="compositionally biased region" description="Polar residues" evidence="2">
    <location>
        <begin position="36"/>
        <end position="55"/>
    </location>
</feature>